<protein>
    <recommendedName>
        <fullName evidence="1">Acetyl-coenzyme A carboxylase carboxyl transferase subunit alpha</fullName>
        <shortName evidence="1">ACCase subunit alpha</shortName>
        <shortName evidence="1">Acetyl-CoA carboxylase carboxyltransferase subunit alpha</shortName>
        <ecNumber evidence="1">2.1.3.15</ecNumber>
    </recommendedName>
</protein>
<dbReference type="EC" id="2.1.3.15" evidence="1"/>
<dbReference type="EMBL" id="AM295007">
    <property type="protein sequence ID" value="CAM29703.1"/>
    <property type="molecule type" value="Genomic_DNA"/>
</dbReference>
<dbReference type="RefSeq" id="WP_002983349.1">
    <property type="nucleotide sequence ID" value="NC_009332.1"/>
</dbReference>
<dbReference type="SMR" id="A2RCY0"/>
<dbReference type="KEGG" id="spf:SpyM50361"/>
<dbReference type="HOGENOM" id="CLU_015486_0_2_9"/>
<dbReference type="UniPathway" id="UPA00655">
    <property type="reaction ID" value="UER00711"/>
</dbReference>
<dbReference type="GO" id="GO:0009317">
    <property type="term" value="C:acetyl-CoA carboxylase complex"/>
    <property type="evidence" value="ECO:0007669"/>
    <property type="project" value="InterPro"/>
</dbReference>
<dbReference type="GO" id="GO:0003989">
    <property type="term" value="F:acetyl-CoA carboxylase activity"/>
    <property type="evidence" value="ECO:0007669"/>
    <property type="project" value="InterPro"/>
</dbReference>
<dbReference type="GO" id="GO:0005524">
    <property type="term" value="F:ATP binding"/>
    <property type="evidence" value="ECO:0007669"/>
    <property type="project" value="UniProtKB-KW"/>
</dbReference>
<dbReference type="GO" id="GO:0016743">
    <property type="term" value="F:carboxyl- or carbamoyltransferase activity"/>
    <property type="evidence" value="ECO:0007669"/>
    <property type="project" value="UniProtKB-UniRule"/>
</dbReference>
<dbReference type="GO" id="GO:0006633">
    <property type="term" value="P:fatty acid biosynthetic process"/>
    <property type="evidence" value="ECO:0007669"/>
    <property type="project" value="UniProtKB-KW"/>
</dbReference>
<dbReference type="GO" id="GO:2001295">
    <property type="term" value="P:malonyl-CoA biosynthetic process"/>
    <property type="evidence" value="ECO:0007669"/>
    <property type="project" value="UniProtKB-UniRule"/>
</dbReference>
<dbReference type="Gene3D" id="3.90.226.10">
    <property type="entry name" value="2-enoyl-CoA Hydratase, Chain A, domain 1"/>
    <property type="match status" value="1"/>
</dbReference>
<dbReference type="HAMAP" id="MF_00823">
    <property type="entry name" value="AcetylCoA_CT_alpha"/>
    <property type="match status" value="1"/>
</dbReference>
<dbReference type="InterPro" id="IPR001095">
    <property type="entry name" value="Acetyl_CoA_COase_a_su"/>
</dbReference>
<dbReference type="InterPro" id="IPR029045">
    <property type="entry name" value="ClpP/crotonase-like_dom_sf"/>
</dbReference>
<dbReference type="InterPro" id="IPR011763">
    <property type="entry name" value="COA_CT_C"/>
</dbReference>
<dbReference type="NCBIfam" id="TIGR00513">
    <property type="entry name" value="accA"/>
    <property type="match status" value="1"/>
</dbReference>
<dbReference type="NCBIfam" id="NF041504">
    <property type="entry name" value="AccA_sub"/>
    <property type="match status" value="1"/>
</dbReference>
<dbReference type="NCBIfam" id="NF004344">
    <property type="entry name" value="PRK05724.1"/>
    <property type="match status" value="1"/>
</dbReference>
<dbReference type="NCBIfam" id="NF008971">
    <property type="entry name" value="PRK12319.1"/>
    <property type="match status" value="1"/>
</dbReference>
<dbReference type="PANTHER" id="PTHR42853">
    <property type="entry name" value="ACETYL-COENZYME A CARBOXYLASE CARBOXYL TRANSFERASE SUBUNIT ALPHA"/>
    <property type="match status" value="1"/>
</dbReference>
<dbReference type="PANTHER" id="PTHR42853:SF3">
    <property type="entry name" value="ACETYL-COENZYME A CARBOXYLASE CARBOXYL TRANSFERASE SUBUNIT ALPHA, CHLOROPLASTIC"/>
    <property type="match status" value="1"/>
</dbReference>
<dbReference type="Pfam" id="PF03255">
    <property type="entry name" value="ACCA"/>
    <property type="match status" value="1"/>
</dbReference>
<dbReference type="PRINTS" id="PR01069">
    <property type="entry name" value="ACCCTRFRASEA"/>
</dbReference>
<dbReference type="SUPFAM" id="SSF52096">
    <property type="entry name" value="ClpP/crotonase"/>
    <property type="match status" value="1"/>
</dbReference>
<dbReference type="PROSITE" id="PS50989">
    <property type="entry name" value="COA_CT_CTER"/>
    <property type="match status" value="1"/>
</dbReference>
<evidence type="ECO:0000255" key="1">
    <source>
        <dbReference type="HAMAP-Rule" id="MF_00823"/>
    </source>
</evidence>
<evidence type="ECO:0000255" key="2">
    <source>
        <dbReference type="PROSITE-ProRule" id="PRU01137"/>
    </source>
</evidence>
<organism>
    <name type="scientific">Streptococcus pyogenes serotype M5 (strain Manfredo)</name>
    <dbReference type="NCBI Taxonomy" id="160491"/>
    <lineage>
        <taxon>Bacteria</taxon>
        <taxon>Bacillati</taxon>
        <taxon>Bacillota</taxon>
        <taxon>Bacilli</taxon>
        <taxon>Lactobacillales</taxon>
        <taxon>Streptococcaceae</taxon>
        <taxon>Streptococcus</taxon>
    </lineage>
</organism>
<sequence>MTDVSRVLKEARDQGRLTTLDYANLIFDDFMELHGDRHFSDDGAIVGGLAYLAGQPVTVIGIQKGKNLQDNLARNFGQPNPEGYRKALRLMKQAEKFGRPVVTFINTAGAYPGVGAEERGQGEAIAKNLMEMSDLKVPIIAIIIGEGGSGGALALAVADQVWMLENTMYAVLSPEGFASILWKDGSRATEAAELMKITAGELYQMGIVDRIIPEHGYFSSEIVDIIKANLIEQITSLQAKPLDQLLDERYQRFRKY</sequence>
<proteinExistence type="inferred from homology"/>
<feature type="chain" id="PRO_1000062686" description="Acetyl-coenzyme A carboxylase carboxyl transferase subunit alpha">
    <location>
        <begin position="1"/>
        <end position="256"/>
    </location>
</feature>
<feature type="domain" description="CoA carboxyltransferase C-terminal" evidence="2">
    <location>
        <begin position="1"/>
        <end position="236"/>
    </location>
</feature>
<keyword id="KW-0067">ATP-binding</keyword>
<keyword id="KW-0963">Cytoplasm</keyword>
<keyword id="KW-0275">Fatty acid biosynthesis</keyword>
<keyword id="KW-0276">Fatty acid metabolism</keyword>
<keyword id="KW-0444">Lipid biosynthesis</keyword>
<keyword id="KW-0443">Lipid metabolism</keyword>
<keyword id="KW-0547">Nucleotide-binding</keyword>
<keyword id="KW-0808">Transferase</keyword>
<gene>
    <name evidence="1" type="primary">accA</name>
    <name type="ordered locus">SpyM50361</name>
</gene>
<comment type="function">
    <text evidence="1">Component of the acetyl coenzyme A carboxylase (ACC) complex. First, biotin carboxylase catalyzes the carboxylation of biotin on its carrier protein (BCCP) and then the CO(2) group is transferred by the carboxyltransferase to acetyl-CoA to form malonyl-CoA.</text>
</comment>
<comment type="catalytic activity">
    <reaction evidence="1">
        <text>N(6)-carboxybiotinyl-L-lysyl-[protein] + acetyl-CoA = N(6)-biotinyl-L-lysyl-[protein] + malonyl-CoA</text>
        <dbReference type="Rhea" id="RHEA:54728"/>
        <dbReference type="Rhea" id="RHEA-COMP:10505"/>
        <dbReference type="Rhea" id="RHEA-COMP:10506"/>
        <dbReference type="ChEBI" id="CHEBI:57288"/>
        <dbReference type="ChEBI" id="CHEBI:57384"/>
        <dbReference type="ChEBI" id="CHEBI:83144"/>
        <dbReference type="ChEBI" id="CHEBI:83145"/>
        <dbReference type="EC" id="2.1.3.15"/>
    </reaction>
</comment>
<comment type="pathway">
    <text evidence="1">Lipid metabolism; malonyl-CoA biosynthesis; malonyl-CoA from acetyl-CoA: step 1/1.</text>
</comment>
<comment type="subunit">
    <text evidence="1">Acetyl-CoA carboxylase is a heterohexamer composed of biotin carboxyl carrier protein (AccB), biotin carboxylase (AccC) and two subunits each of ACCase subunit alpha (AccA) and ACCase subunit beta (AccD).</text>
</comment>
<comment type="subcellular location">
    <subcellularLocation>
        <location evidence="1">Cytoplasm</location>
    </subcellularLocation>
</comment>
<comment type="similarity">
    <text evidence="1">Belongs to the AccA family.</text>
</comment>
<reference key="1">
    <citation type="journal article" date="2007" name="J. Bacteriol.">
        <title>Complete genome of acute rheumatic fever-associated serotype M5 Streptococcus pyogenes strain Manfredo.</title>
        <authorList>
            <person name="Holden M.T.G."/>
            <person name="Scott A."/>
            <person name="Cherevach I."/>
            <person name="Chillingworth T."/>
            <person name="Churcher C."/>
            <person name="Cronin A."/>
            <person name="Dowd L."/>
            <person name="Feltwell T."/>
            <person name="Hamlin N."/>
            <person name="Holroyd S."/>
            <person name="Jagels K."/>
            <person name="Moule S."/>
            <person name="Mungall K."/>
            <person name="Quail M.A."/>
            <person name="Price C."/>
            <person name="Rabbinowitsch E."/>
            <person name="Sharp S."/>
            <person name="Skelton J."/>
            <person name="Whitehead S."/>
            <person name="Barrell B.G."/>
            <person name="Kehoe M."/>
            <person name="Parkhill J."/>
        </authorList>
    </citation>
    <scope>NUCLEOTIDE SEQUENCE [LARGE SCALE GENOMIC DNA]</scope>
    <source>
        <strain>Manfredo</strain>
    </source>
</reference>
<accession>A2RCY0</accession>
<name>ACCA_STRPG</name>